<name>AURJ_GIBZE</name>
<accession>I1RF60</accession>
<proteinExistence type="evidence at protein level"/>
<protein>
    <recommendedName>
        <fullName evidence="9">O-methyltransferase aurJ</fullName>
        <ecNumber evidence="7">2.1.1.-</ecNumber>
    </recommendedName>
    <alternativeName>
        <fullName evidence="9">Aurofusarin biosynthesis cluster protein J</fullName>
    </alternativeName>
    <alternativeName>
        <fullName evidence="8">Gibberella pigment protein 7</fullName>
    </alternativeName>
</protein>
<dbReference type="EC" id="2.1.1.-" evidence="7"/>
<dbReference type="EMBL" id="HG970332">
    <property type="protein sequence ID" value="CEF74603.1"/>
    <property type="molecule type" value="Genomic_DNA"/>
</dbReference>
<dbReference type="RefSeq" id="XP_011318235.1">
    <property type="nucleotide sequence ID" value="XM_011319933.1"/>
</dbReference>
<dbReference type="SMR" id="I1RF60"/>
<dbReference type="STRING" id="229533.I1RF60"/>
<dbReference type="KEGG" id="fgr:FGSG_02326"/>
<dbReference type="VEuPathDB" id="FungiDB:FGRAMPH1_01G05597"/>
<dbReference type="eggNOG" id="ENOG502SIYN">
    <property type="taxonomic scope" value="Eukaryota"/>
</dbReference>
<dbReference type="HOGENOM" id="CLU_005533_1_4_1"/>
<dbReference type="InParanoid" id="I1RF60"/>
<dbReference type="OrthoDB" id="24602at110618"/>
<dbReference type="BioCyc" id="MetaCyc:MONOMER-19449"/>
<dbReference type="Proteomes" id="UP000070720">
    <property type="component" value="Chromosome 1"/>
</dbReference>
<dbReference type="GO" id="GO:0008171">
    <property type="term" value="F:O-methyltransferase activity"/>
    <property type="evidence" value="ECO:0007669"/>
    <property type="project" value="InterPro"/>
</dbReference>
<dbReference type="GO" id="GO:0032259">
    <property type="term" value="P:methylation"/>
    <property type="evidence" value="ECO:0007669"/>
    <property type="project" value="UniProtKB-KW"/>
</dbReference>
<dbReference type="GO" id="GO:0044550">
    <property type="term" value="P:secondary metabolite biosynthetic process"/>
    <property type="evidence" value="ECO:0007669"/>
    <property type="project" value="UniProtKB-ARBA"/>
</dbReference>
<dbReference type="Gene3D" id="3.40.50.150">
    <property type="entry name" value="Vaccinia Virus protein VP39"/>
    <property type="match status" value="1"/>
</dbReference>
<dbReference type="Gene3D" id="1.10.10.10">
    <property type="entry name" value="Winged helix-like DNA-binding domain superfamily/Winged helix DNA-binding domain"/>
    <property type="match status" value="1"/>
</dbReference>
<dbReference type="InterPro" id="IPR016461">
    <property type="entry name" value="COMT-like"/>
</dbReference>
<dbReference type="InterPro" id="IPR001077">
    <property type="entry name" value="O_MeTrfase_dom"/>
</dbReference>
<dbReference type="InterPro" id="IPR029063">
    <property type="entry name" value="SAM-dependent_MTases_sf"/>
</dbReference>
<dbReference type="InterPro" id="IPR036388">
    <property type="entry name" value="WH-like_DNA-bd_sf"/>
</dbReference>
<dbReference type="InterPro" id="IPR036390">
    <property type="entry name" value="WH_DNA-bd_sf"/>
</dbReference>
<dbReference type="PANTHER" id="PTHR43712:SF19">
    <property type="entry name" value="DUAL O-METHYLTRANSFERASE_FAD-DEPENDENT MONOOXYGENASE ELCB"/>
    <property type="match status" value="1"/>
</dbReference>
<dbReference type="PANTHER" id="PTHR43712">
    <property type="entry name" value="PUTATIVE (AFU_ORTHOLOGUE AFUA_4G14580)-RELATED"/>
    <property type="match status" value="1"/>
</dbReference>
<dbReference type="Pfam" id="PF00891">
    <property type="entry name" value="Methyltransf_2"/>
    <property type="match status" value="1"/>
</dbReference>
<dbReference type="SUPFAM" id="SSF53335">
    <property type="entry name" value="S-adenosyl-L-methionine-dependent methyltransferases"/>
    <property type="match status" value="1"/>
</dbReference>
<dbReference type="SUPFAM" id="SSF46785">
    <property type="entry name" value="Winged helix' DNA-binding domain"/>
    <property type="match status" value="1"/>
</dbReference>
<dbReference type="PROSITE" id="PS51683">
    <property type="entry name" value="SAM_OMT_II"/>
    <property type="match status" value="1"/>
</dbReference>
<keyword id="KW-0489">Methyltransferase</keyword>
<keyword id="KW-1185">Reference proteome</keyword>
<keyword id="KW-0949">S-adenosyl-L-methionine</keyword>
<keyword id="KW-0808">Transferase</keyword>
<reference key="1">
    <citation type="journal article" date="2007" name="Science">
        <title>The Fusarium graminearum genome reveals a link between localized polymorphism and pathogen specialization.</title>
        <authorList>
            <person name="Cuomo C.A."/>
            <person name="Gueldener U."/>
            <person name="Xu J.-R."/>
            <person name="Trail F."/>
            <person name="Turgeon B.G."/>
            <person name="Di Pietro A."/>
            <person name="Walton J.D."/>
            <person name="Ma L.-J."/>
            <person name="Baker S.E."/>
            <person name="Rep M."/>
            <person name="Adam G."/>
            <person name="Antoniw J."/>
            <person name="Baldwin T."/>
            <person name="Calvo S.E."/>
            <person name="Chang Y.-L."/>
            <person name="DeCaprio D."/>
            <person name="Gale L.R."/>
            <person name="Gnerre S."/>
            <person name="Goswami R.S."/>
            <person name="Hammond-Kosack K."/>
            <person name="Harris L.J."/>
            <person name="Hilburn K."/>
            <person name="Kennell J.C."/>
            <person name="Kroken S."/>
            <person name="Magnuson J.K."/>
            <person name="Mannhaupt G."/>
            <person name="Mauceli E.W."/>
            <person name="Mewes H.-W."/>
            <person name="Mitterbauer R."/>
            <person name="Muehlbauer G."/>
            <person name="Muensterkoetter M."/>
            <person name="Nelson D."/>
            <person name="O'Donnell K."/>
            <person name="Ouellet T."/>
            <person name="Qi W."/>
            <person name="Quesneville H."/>
            <person name="Roncero M.I.G."/>
            <person name="Seong K.-Y."/>
            <person name="Tetko I.V."/>
            <person name="Urban M."/>
            <person name="Waalwijk C."/>
            <person name="Ward T.J."/>
            <person name="Yao J."/>
            <person name="Birren B.W."/>
            <person name="Kistler H.C."/>
        </authorList>
    </citation>
    <scope>NUCLEOTIDE SEQUENCE [LARGE SCALE GENOMIC DNA]</scope>
    <source>
        <strain>ATCC MYA-4620 / CBS 123657 / FGSC 9075 / NRRL 31084 / PH-1</strain>
    </source>
</reference>
<reference key="2">
    <citation type="journal article" date="2010" name="Nature">
        <title>Comparative genomics reveals mobile pathogenicity chromosomes in Fusarium.</title>
        <authorList>
            <person name="Ma L.-J."/>
            <person name="van der Does H.C."/>
            <person name="Borkovich K.A."/>
            <person name="Coleman J.J."/>
            <person name="Daboussi M.-J."/>
            <person name="Di Pietro A."/>
            <person name="Dufresne M."/>
            <person name="Freitag M."/>
            <person name="Grabherr M."/>
            <person name="Henrissat B."/>
            <person name="Houterman P.M."/>
            <person name="Kang S."/>
            <person name="Shim W.-B."/>
            <person name="Woloshuk C."/>
            <person name="Xie X."/>
            <person name="Xu J.-R."/>
            <person name="Antoniw J."/>
            <person name="Baker S.E."/>
            <person name="Bluhm B.H."/>
            <person name="Breakspear A."/>
            <person name="Brown D.W."/>
            <person name="Butchko R.A.E."/>
            <person name="Chapman S."/>
            <person name="Coulson R."/>
            <person name="Coutinho P.M."/>
            <person name="Danchin E.G.J."/>
            <person name="Diener A."/>
            <person name="Gale L.R."/>
            <person name="Gardiner D.M."/>
            <person name="Goff S."/>
            <person name="Hammond-Kosack K.E."/>
            <person name="Hilburn K."/>
            <person name="Hua-Van A."/>
            <person name="Jonkers W."/>
            <person name="Kazan K."/>
            <person name="Kodira C.D."/>
            <person name="Koehrsen M."/>
            <person name="Kumar L."/>
            <person name="Lee Y.-H."/>
            <person name="Li L."/>
            <person name="Manners J.M."/>
            <person name="Miranda-Saavedra D."/>
            <person name="Mukherjee M."/>
            <person name="Park G."/>
            <person name="Park J."/>
            <person name="Park S.-Y."/>
            <person name="Proctor R.H."/>
            <person name="Regev A."/>
            <person name="Ruiz-Roldan M.C."/>
            <person name="Sain D."/>
            <person name="Sakthikumar S."/>
            <person name="Sykes S."/>
            <person name="Schwartz D.C."/>
            <person name="Turgeon B.G."/>
            <person name="Wapinski I."/>
            <person name="Yoder O."/>
            <person name="Young S."/>
            <person name="Zeng Q."/>
            <person name="Zhou S."/>
            <person name="Galagan J."/>
            <person name="Cuomo C.A."/>
            <person name="Kistler H.C."/>
            <person name="Rep M."/>
        </authorList>
    </citation>
    <scope>GENOME REANNOTATION</scope>
    <source>
        <strain>ATCC MYA-4620 / CBS 123657 / FGSC 9075 / NRRL 31084 / PH-1</strain>
    </source>
</reference>
<reference key="3">
    <citation type="journal article" date="2015" name="BMC Genomics">
        <title>The completed genome sequence of the pathogenic ascomycete fungus Fusarium graminearum.</title>
        <authorList>
            <person name="King R."/>
            <person name="Urban M."/>
            <person name="Hammond-Kosack M.C.U."/>
            <person name="Hassani-Pak K."/>
            <person name="Hammond-Kosack K.E."/>
        </authorList>
    </citation>
    <scope>NUCLEOTIDE SEQUENCE [LARGE SCALE GENOMIC DNA]</scope>
    <source>
        <strain>ATCC MYA-4620 / CBS 123657 / FGSC 9075 / NRRL 31084 / PH-1</strain>
    </source>
</reference>
<reference key="4">
    <citation type="journal article" date="2005" name="Appl. Environ. Microbiol.">
        <title>Putative polyketide synthase and laccase genes for biosynthesis of aurofusarin in Gibberella zeae.</title>
        <authorList>
            <person name="Kim J.E."/>
            <person name="Han K.H."/>
            <person name="Jin J."/>
            <person name="Kim H."/>
            <person name="Kim J.C."/>
            <person name="Yun S.H."/>
            <person name="Lee Y.W."/>
        </authorList>
    </citation>
    <scope>FUNCTION</scope>
</reference>
<reference key="5">
    <citation type="journal article" date="2005" name="Fungal Genet. Biol.">
        <title>Identification of a gene cluster responsible for the biosynthesis of aurofusarin in the Fusarium graminearum species complex.</title>
        <authorList>
            <person name="Malz S."/>
            <person name="Grell M.N."/>
            <person name="Thrane C."/>
            <person name="Maier F.J."/>
            <person name="Rosager P."/>
            <person name="Felk A."/>
            <person name="Albertsen K.S."/>
            <person name="Salomon S."/>
            <person name="Bohn L."/>
            <person name="Schaefer W."/>
            <person name="Giese H."/>
        </authorList>
    </citation>
    <scope>FUNCTION</scope>
    <scope>PATHWAY</scope>
</reference>
<reference key="6">
    <citation type="journal article" date="2006" name="Mol. Microbiol.">
        <title>The biosynthetic pathway for aurofusarin in Fusarium graminearum reveals a close link between the naphthoquinones and naphthopyrones.</title>
        <authorList>
            <person name="Frandsen R.J."/>
            <person name="Nielsen N.J."/>
            <person name="Maolanon N."/>
            <person name="Soerensen J.C."/>
            <person name="Olsson S."/>
            <person name="Nielsen J."/>
            <person name="Giese H."/>
        </authorList>
    </citation>
    <scope>FUNCTION</scope>
    <scope>INDUCTION</scope>
    <scope>PATHWAY</scope>
</reference>
<reference key="7">
    <citation type="journal article" date="2006" name="Appl. Environ. Microbiol.">
        <title>GIP2, a putative transcription factor that regulates the aurofusarin biosynthetic gene cluster in Gibberella zeae.</title>
        <authorList>
            <person name="Kim J.E."/>
            <person name="Jin J."/>
            <person name="Kim H."/>
            <person name="Kim J.C."/>
            <person name="Yun S.H."/>
            <person name="Lee Y.W."/>
        </authorList>
    </citation>
    <scope>INDUCTION</scope>
</reference>
<reference key="8">
    <citation type="journal article" date="2011" name="J. Biol. Chem.">
        <title>Two novel classes of enzymes are required for the biosynthesis of aurofusarin in Fusarium graminearum.</title>
        <authorList>
            <person name="Frandsen R.J."/>
            <person name="Schuett C."/>
            <person name="Lund B.W."/>
            <person name="Staerk D."/>
            <person name="Nielsen J."/>
            <person name="Olsson S."/>
            <person name="Giese H."/>
        </authorList>
    </citation>
    <scope>FUNCTION</scope>
</reference>
<reference key="9">
    <citation type="journal article" date="2013" name="Microb. Cell Fact.">
        <title>Reconstruction of the biosynthetic pathway for the core fungal polyketide scaffold rubrofusarin in Saccharomyces cerevisiae.</title>
        <authorList>
            <person name="Rugbjerg P."/>
            <person name="Naesby M."/>
            <person name="Mortensen U.H."/>
            <person name="Frandsen R.J."/>
        </authorList>
    </citation>
    <scope>FUNCTION</scope>
    <scope>CATALYTIC ACTIVITY</scope>
    <scope>PATHWAY</scope>
</reference>
<feature type="chain" id="PRO_0000441088" description="O-methyltransferase aurJ">
    <location>
        <begin position="1"/>
        <end position="439"/>
    </location>
</feature>
<feature type="active site" description="Proton acceptor" evidence="1">
    <location>
        <position position="338"/>
    </location>
</feature>
<feature type="binding site" evidence="1">
    <location>
        <position position="283"/>
    </location>
    <ligand>
        <name>S-adenosyl-L-methionine</name>
        <dbReference type="ChEBI" id="CHEBI:59789"/>
    </ligand>
</feature>
<sequence>MGSISSPSLIIDLANAVSSAAKNLDTQLQSQGFPQPSFEADGPTYVVPKDAPKAAHEARVATAEAALKLFNLVSGPSELLPNMTASYHTIFALQWLHHFDVFSHIPLDGSLSYEKLATKANVPESLLKSVARMAMTSNILAEPTTGQVAHSANSAMFVKFPNMRDWASYMFTASIPTAAAMVQATEKWPGSVKKTETAYNIAFNHDLPFFDHLSQSPVMTKQFSGYMRSVTDGQGMDLSHLVNGFDWASLPDKSLIVDIGGSAGHASYALAAAYPHLRFEVQDLDTVVNGEKAAKEHEEAVSKHVIGTDNRVTFKAHNFFEAQPTKDATVYMLRMIIHDWPDAEAKTILGNLVPALESAKATLLIMDTVLPSPGSIPSVRERVIRTRDLTMRQVFNAKERGVDDWEAILRETDSRLTLKNLRQPEGSNMCLLTISLQDD</sequence>
<gene>
    <name evidence="10" type="primary">aurJ</name>
    <name evidence="8" type="synonym">GIP7</name>
    <name type="ORF">FG02326</name>
    <name type="ORF">FGRAMPH1_01T05597</name>
</gene>
<organism>
    <name type="scientific">Gibberella zeae (strain ATCC MYA-4620 / CBS 123657 / FGSC 9075 / NRRL 31084 / PH-1)</name>
    <name type="common">Wheat head blight fungus</name>
    <name type="synonym">Fusarium graminearum</name>
    <dbReference type="NCBI Taxonomy" id="229533"/>
    <lineage>
        <taxon>Eukaryota</taxon>
        <taxon>Fungi</taxon>
        <taxon>Dikarya</taxon>
        <taxon>Ascomycota</taxon>
        <taxon>Pezizomycotina</taxon>
        <taxon>Sordariomycetes</taxon>
        <taxon>Hypocreomycetidae</taxon>
        <taxon>Hypocreales</taxon>
        <taxon>Nectriaceae</taxon>
        <taxon>Fusarium</taxon>
    </lineage>
</organism>
<evidence type="ECO:0000255" key="1">
    <source>
        <dbReference type="PROSITE-ProRule" id="PRU01020"/>
    </source>
</evidence>
<evidence type="ECO:0000269" key="2">
    <source>
    </source>
</evidence>
<evidence type="ECO:0000269" key="3">
    <source>
    </source>
</evidence>
<evidence type="ECO:0000269" key="4">
    <source>
    </source>
</evidence>
<evidence type="ECO:0000269" key="5">
    <source>
    </source>
</evidence>
<evidence type="ECO:0000269" key="6">
    <source>
    </source>
</evidence>
<evidence type="ECO:0000269" key="7">
    <source>
    </source>
</evidence>
<evidence type="ECO:0000303" key="8">
    <source>
    </source>
</evidence>
<evidence type="ECO:0000303" key="9">
    <source>
    </source>
</evidence>
<evidence type="ECO:0000303" key="10">
    <source>
    </source>
</evidence>
<evidence type="ECO:0000305" key="11"/>
<comment type="function">
    <text evidence="2 3 5 6 7">O-methyltransferase; part of the gene cluster that mediates the biosynthesis of aurofusarin, a red mycelium pigment which is acting as a mycotoxin (PubMed:15809006, PubMed:15811992, PubMed:16879655). The first step is performed by the polyketide synthase which condenses one acetyl-CoA and 6 malonyl-CoA units to form the first intermediate, the cyclic heptaketide and yellow pigment YWA1 (PubMed:21296881, PubMed:23557488). The C2 hydroxyl group in the pyrone ring of YWA1 is probably formed during ring closure by an aldol-type cyclization reaction (PubMed:21296881). The dehydratase aurZ then acts as the first tailoring enzyme in the aurofusarin biosynthetic pathway by converting YWA1 to nor-rubrofusarin (PubMed:21296881, PubMed:23557488). Nor-rubrofusarin is then methylated to rubrofusarin by the O-methyltransferase aurJ (PubMed:21296881, PubMed:23557488). Rubrofusarin is then transported across the plasma membrane by the rubrofusarin-specific pump aurT for further enzymatic processing by the extracellular complex composed of GIP1, aurF, aurO and aurS to yield aurofusarin (PubMed:21296881).</text>
</comment>
<comment type="catalytic activity">
    <reaction evidence="7">
        <text>norrubrofusarin + S-adenosyl-L-methionine = rubrofusarin + S-adenosyl-L-homocysteine + H(+)</text>
        <dbReference type="Rhea" id="RHEA:62684"/>
        <dbReference type="ChEBI" id="CHEBI:15378"/>
        <dbReference type="ChEBI" id="CHEBI:57856"/>
        <dbReference type="ChEBI" id="CHEBI:59789"/>
        <dbReference type="ChEBI" id="CHEBI:145839"/>
        <dbReference type="ChEBI" id="CHEBI:145894"/>
    </reaction>
    <physiologicalReaction direction="left-to-right" evidence="7">
        <dbReference type="Rhea" id="RHEA:62685"/>
    </physiologicalReaction>
</comment>
<comment type="pathway">
    <text evidence="2 5 7">Pigment biosynthesis.</text>
</comment>
<comment type="induction">
    <text evidence="4 5">Expression is regulated by the aurofusarin biosynthesis cluster-specific transcription factor aurR1/GIP2 (PubMed:16461721, PubMed:16879655).</text>
</comment>
<comment type="similarity">
    <text evidence="11">Belongs to the class I-like SAM-binding methyltransferase superfamily. Cation-independent O-methyltransferase family. COMT subfamily.</text>
</comment>